<protein>
    <recommendedName>
        <fullName>Superoxide dismutase [Cu-Zn]</fullName>
        <shortName evidence="8">SOD-1</shortName>
        <ecNumber evidence="5">1.15.1.1</ecNumber>
    </recommendedName>
</protein>
<gene>
    <name type="primary">sod-1</name>
    <name type="ORF">C15F1.7</name>
</gene>
<dbReference type="EC" id="1.15.1.1" evidence="5"/>
<dbReference type="EMBL" id="L20135">
    <property type="protein sequence ID" value="AAA28147.1"/>
    <property type="molecule type" value="mRNA"/>
</dbReference>
<dbReference type="EMBL" id="X77020">
    <property type="protein sequence ID" value="CAA54318.1"/>
    <property type="molecule type" value="Genomic_DNA"/>
</dbReference>
<dbReference type="EMBL" id="FO080553">
    <property type="protein sequence ID" value="CCD64617.1"/>
    <property type="molecule type" value="Genomic_DNA"/>
</dbReference>
<dbReference type="EMBL" id="FO080553">
    <property type="protein sequence ID" value="CCD64618.1"/>
    <property type="molecule type" value="Genomic_DNA"/>
</dbReference>
<dbReference type="PIR" id="S41319">
    <property type="entry name" value="A48256"/>
</dbReference>
<dbReference type="RefSeq" id="NP_001021956.1">
    <molecule id="P34697-1"/>
    <property type="nucleotide sequence ID" value="NM_001026785.4"/>
</dbReference>
<dbReference type="RefSeq" id="NP_001021957.1">
    <molecule id="P34697-2"/>
    <property type="nucleotide sequence ID" value="NM_001026786.5"/>
</dbReference>
<dbReference type="PDB" id="3KBE">
    <property type="method" value="X-ray"/>
    <property type="resolution" value="1.10 A"/>
    <property type="chains" value="A=24-180"/>
</dbReference>
<dbReference type="PDB" id="3KBF">
    <property type="method" value="X-ray"/>
    <property type="resolution" value="1.30 A"/>
    <property type="chains" value="A=24-180"/>
</dbReference>
<dbReference type="PDBsum" id="3KBE"/>
<dbReference type="PDBsum" id="3KBF"/>
<dbReference type="SMR" id="P34697"/>
<dbReference type="BioGRID" id="39479">
    <property type="interactions" value="47"/>
</dbReference>
<dbReference type="FunCoup" id="P34697">
    <property type="interactions" value="2125"/>
</dbReference>
<dbReference type="IntAct" id="P34697">
    <property type="interactions" value="1"/>
</dbReference>
<dbReference type="STRING" id="6239.C15F1.7a.1"/>
<dbReference type="PaxDb" id="6239-C15F1.7a"/>
<dbReference type="PeptideAtlas" id="P34697"/>
<dbReference type="EnsemblMetazoa" id="C15F1.7a.1">
    <molecule id="P34697-1"/>
    <property type="protein sequence ID" value="C15F1.7a.1"/>
    <property type="gene ID" value="WBGene00004930"/>
</dbReference>
<dbReference type="EnsemblMetazoa" id="C15F1.7b.1">
    <molecule id="P34697-2"/>
    <property type="protein sequence ID" value="C15F1.7b.1"/>
    <property type="gene ID" value="WBGene00004930"/>
</dbReference>
<dbReference type="GeneID" id="174141"/>
<dbReference type="KEGG" id="cel:CELE_C15F1.7"/>
<dbReference type="UCSC" id="C15F1.7a">
    <molecule id="P34697-1"/>
    <property type="organism name" value="c. elegans"/>
</dbReference>
<dbReference type="AGR" id="WB:WBGene00004930"/>
<dbReference type="CTD" id="174141"/>
<dbReference type="WormBase" id="C15F1.7a">
    <molecule id="P34697-1"/>
    <property type="protein sequence ID" value="CE23550"/>
    <property type="gene ID" value="WBGene00004930"/>
    <property type="gene designation" value="sod-1"/>
</dbReference>
<dbReference type="WormBase" id="C15F1.7b">
    <molecule id="P34697-2"/>
    <property type="protein sequence ID" value="CE20508"/>
    <property type="gene ID" value="WBGene00004930"/>
    <property type="gene designation" value="sod-1"/>
</dbReference>
<dbReference type="eggNOG" id="KOG0441">
    <property type="taxonomic scope" value="Eukaryota"/>
</dbReference>
<dbReference type="GeneTree" id="ENSGT00940000168521"/>
<dbReference type="HOGENOM" id="CLU_056632_4_1_1"/>
<dbReference type="InParanoid" id="P34697"/>
<dbReference type="OMA" id="GARYACG"/>
<dbReference type="OrthoDB" id="2015551at2759"/>
<dbReference type="PhylomeDB" id="P34697"/>
<dbReference type="Reactome" id="R-CEL-114608">
    <property type="pathway name" value="Platelet degranulation"/>
</dbReference>
<dbReference type="Reactome" id="R-CEL-3299685">
    <property type="pathway name" value="Detoxification of Reactive Oxygen Species"/>
</dbReference>
<dbReference type="EvolutionaryTrace" id="P34697"/>
<dbReference type="PRO" id="PR:P34697"/>
<dbReference type="Proteomes" id="UP000001940">
    <property type="component" value="Chromosome II"/>
</dbReference>
<dbReference type="Bgee" id="WBGene00004930">
    <property type="expression patterns" value="Expressed in adult organism and 4 other cell types or tissues"/>
</dbReference>
<dbReference type="GO" id="GO:0005737">
    <property type="term" value="C:cytoplasm"/>
    <property type="evidence" value="ECO:0000305"/>
    <property type="project" value="UniProtKB"/>
</dbReference>
<dbReference type="GO" id="GO:0005829">
    <property type="term" value="C:cytosol"/>
    <property type="evidence" value="ECO:0000314"/>
    <property type="project" value="WormBase"/>
</dbReference>
<dbReference type="GO" id="GO:0005739">
    <property type="term" value="C:mitochondrion"/>
    <property type="evidence" value="ECO:0000314"/>
    <property type="project" value="WormBase"/>
</dbReference>
<dbReference type="GO" id="GO:0005507">
    <property type="term" value="F:copper ion binding"/>
    <property type="evidence" value="ECO:0000314"/>
    <property type="project" value="WormBase"/>
</dbReference>
<dbReference type="GO" id="GO:0042803">
    <property type="term" value="F:protein homodimerization activity"/>
    <property type="evidence" value="ECO:0000314"/>
    <property type="project" value="UniProtKB"/>
</dbReference>
<dbReference type="GO" id="GO:0004784">
    <property type="term" value="F:superoxide dismutase activity"/>
    <property type="evidence" value="ECO:0000314"/>
    <property type="project" value="UniProtKB"/>
</dbReference>
<dbReference type="GO" id="GO:0060378">
    <property type="term" value="P:regulation of brood size"/>
    <property type="evidence" value="ECO:0000315"/>
    <property type="project" value="UniProtKB"/>
</dbReference>
<dbReference type="GO" id="GO:0040028">
    <property type="term" value="P:regulation of vulval development"/>
    <property type="evidence" value="ECO:0000316"/>
    <property type="project" value="WormBase"/>
</dbReference>
<dbReference type="GO" id="GO:0019430">
    <property type="term" value="P:removal of superoxide radicals"/>
    <property type="evidence" value="ECO:0000315"/>
    <property type="project" value="WormBase"/>
</dbReference>
<dbReference type="GO" id="GO:0006801">
    <property type="term" value="P:superoxide metabolic process"/>
    <property type="evidence" value="ECO:0000314"/>
    <property type="project" value="UniProtKB"/>
</dbReference>
<dbReference type="CDD" id="cd00305">
    <property type="entry name" value="Cu-Zn_Superoxide_Dismutase"/>
    <property type="match status" value="1"/>
</dbReference>
<dbReference type="FunFam" id="2.60.40.200:FF:000011">
    <property type="entry name" value="Superoxide dismutase [Cu-Zn]"/>
    <property type="match status" value="1"/>
</dbReference>
<dbReference type="Gene3D" id="2.60.40.200">
    <property type="entry name" value="Superoxide dismutase, copper/zinc binding domain"/>
    <property type="match status" value="1"/>
</dbReference>
<dbReference type="InterPro" id="IPR036423">
    <property type="entry name" value="SOD-like_Cu/Zn_dom_sf"/>
</dbReference>
<dbReference type="InterPro" id="IPR024134">
    <property type="entry name" value="SOD_Cu/Zn_/chaperone"/>
</dbReference>
<dbReference type="InterPro" id="IPR018152">
    <property type="entry name" value="SOD_Cu/Zn_BS"/>
</dbReference>
<dbReference type="InterPro" id="IPR001424">
    <property type="entry name" value="SOD_Cu_Zn_dom"/>
</dbReference>
<dbReference type="PANTHER" id="PTHR10003">
    <property type="entry name" value="SUPEROXIDE DISMUTASE CU-ZN -RELATED"/>
    <property type="match status" value="1"/>
</dbReference>
<dbReference type="Pfam" id="PF00080">
    <property type="entry name" value="Sod_Cu"/>
    <property type="match status" value="1"/>
</dbReference>
<dbReference type="PRINTS" id="PR00068">
    <property type="entry name" value="CUZNDISMTASE"/>
</dbReference>
<dbReference type="SUPFAM" id="SSF49329">
    <property type="entry name" value="Cu,Zn superoxide dismutase-like"/>
    <property type="match status" value="1"/>
</dbReference>
<dbReference type="PROSITE" id="PS00087">
    <property type="entry name" value="SOD_CU_ZN_1"/>
    <property type="match status" value="1"/>
</dbReference>
<dbReference type="PROSITE" id="PS00332">
    <property type="entry name" value="SOD_CU_ZN_2"/>
    <property type="match status" value="1"/>
</dbReference>
<reference key="1">
    <citation type="journal article" date="1993" name="Proc. Natl. Acad. Sci. U.S.A.">
        <title>Aging and resistance to oxidative damage in Caenorhabditis elegans.</title>
        <authorList>
            <person name="Larsen P.L."/>
        </authorList>
    </citation>
    <scope>NUCLEOTIDE SEQUENCE [MRNA] (ISOFORM B)</scope>
</reference>
<reference key="2">
    <citation type="journal article" date="1994" name="Biochem. Mol. Biol. Int.">
        <title>The copper/zinc superoxide dismutase gene of Caenorhabditis elegans.</title>
        <authorList>
            <person name="Giglio M.P."/>
            <person name="Hunter T."/>
            <person name="Bannister J.V."/>
            <person name="Bannister W.H."/>
            <person name="Hunter G.J."/>
        </authorList>
    </citation>
    <scope>NUCLEOTIDE SEQUENCE [GENOMIC DNA] (ISOFORM B)</scope>
    <source>
        <strain>Bristol N2</strain>
    </source>
</reference>
<reference key="3">
    <citation type="journal article" date="1998" name="Science">
        <title>Genome sequence of the nematode C. elegans: a platform for investigating biology.</title>
        <authorList>
            <consortium name="The C. elegans sequencing consortium"/>
        </authorList>
    </citation>
    <scope>NUCLEOTIDE SEQUENCE [LARGE SCALE GENOMIC DNA]</scope>
    <scope>ALTERNATIVE SPLICING</scope>
    <source>
        <strain>Bristol N2</strain>
    </source>
</reference>
<reference key="4">
    <citation type="journal article" date="2003" name="Science">
        <title>Redox regulation of germline and vulval development in Caenorhabditis elegans.</title>
        <authorList>
            <person name="Shibata Y."/>
            <person name="Branicky R."/>
            <person name="Landaverde I.O."/>
            <person name="Hekimi S."/>
        </authorList>
    </citation>
    <scope>DISRUPTION PHENOTYPE</scope>
</reference>
<reference key="5">
    <citation type="journal article" date="2005" name="J. Biol. Chem.">
        <title>Activation of CuZn superoxide dismutases from Caenorhabditis elegans does not require the copper chaperone CCS.</title>
        <authorList>
            <person name="Jensen L.T."/>
            <person name="Culotta V.C."/>
        </authorList>
    </citation>
    <scope>ACTIVITY REGULATION</scope>
    <scope>SUBUNIT</scope>
    <scope>MUTAGENESIS OF ALA-167 AND ALA-169</scope>
    <scope>FUNCTION</scope>
    <scope>CATALYTIC ACTIVITY</scope>
</reference>
<reference key="6">
    <citation type="journal article" date="2007" name="Genetics">
        <title>A measurable increase in oxidative damage due to reduction in superoxide detoxification fails to shorten the life span of long-lived mitochondrial mutants of Caenorhabditis elegans.</title>
        <authorList>
            <person name="Yang W."/>
            <person name="Li J."/>
            <person name="Hekimi S."/>
        </authorList>
    </citation>
    <scope>FUNCTION</scope>
    <scope>DISRUPTION PHENOTYPE</scope>
</reference>
<reference key="7">
    <citation type="journal article" date="2010" name="Dev. Biol.">
        <title>MSP hormonal control of the oocyte MAP kinase cascade and reactive oxygen species signaling.</title>
        <authorList>
            <person name="Yang Y."/>
            <person name="Han S.M."/>
            <person name="Miller M.A."/>
        </authorList>
    </citation>
    <scope>FUNCTION</scope>
    <scope>DISRUPTION PHENOTYPE</scope>
</reference>
<accession>P34697</accession>
<accession>Q5W7E8</accession>
<accession>Q9N5Y1</accession>
<feature type="signal peptide" evidence="3">
    <location>
        <begin position="1"/>
        <end position="19"/>
    </location>
</feature>
<feature type="chain" id="PRO_0000164102" description="Superoxide dismutase [Cu-Zn]">
    <location>
        <begin position="20"/>
        <end position="180"/>
    </location>
</feature>
<feature type="binding site" evidence="1">
    <location>
        <position position="68"/>
    </location>
    <ligand>
        <name>Cu cation</name>
        <dbReference type="ChEBI" id="CHEBI:23378"/>
        <note>catalytic</note>
    </ligand>
</feature>
<feature type="binding site" evidence="1">
    <location>
        <position position="70"/>
    </location>
    <ligand>
        <name>Cu cation</name>
        <dbReference type="ChEBI" id="CHEBI:23378"/>
        <note>catalytic</note>
    </ligand>
</feature>
<feature type="binding site" evidence="1">
    <location>
        <position position="85"/>
    </location>
    <ligand>
        <name>Cu cation</name>
        <dbReference type="ChEBI" id="CHEBI:23378"/>
        <note>catalytic</note>
    </ligand>
</feature>
<feature type="binding site" evidence="1">
    <location>
        <position position="85"/>
    </location>
    <ligand>
        <name>Zn(2+)</name>
        <dbReference type="ChEBI" id="CHEBI:29105"/>
        <note>structural</note>
    </ligand>
</feature>
<feature type="binding site" evidence="1">
    <location>
        <position position="93"/>
    </location>
    <ligand>
        <name>Zn(2+)</name>
        <dbReference type="ChEBI" id="CHEBI:29105"/>
        <note>structural</note>
    </ligand>
</feature>
<feature type="binding site" evidence="1">
    <location>
        <position position="102"/>
    </location>
    <ligand>
        <name>Zn(2+)</name>
        <dbReference type="ChEBI" id="CHEBI:29105"/>
        <note>structural</note>
    </ligand>
</feature>
<feature type="binding site" evidence="1">
    <location>
        <position position="105"/>
    </location>
    <ligand>
        <name>Zn(2+)</name>
        <dbReference type="ChEBI" id="CHEBI:29105"/>
        <note>structural</note>
    </ligand>
</feature>
<feature type="binding site" evidence="1">
    <location>
        <position position="142"/>
    </location>
    <ligand>
        <name>Cu cation</name>
        <dbReference type="ChEBI" id="CHEBI:23378"/>
        <note>catalytic</note>
    </ligand>
</feature>
<feature type="disulfide bond" evidence="1">
    <location>
        <begin position="79"/>
        <end position="171"/>
    </location>
</feature>
<feature type="splice variant" id="VSP_033146" description="In isoform b." evidence="9">
    <location>
        <begin position="1"/>
        <end position="22"/>
    </location>
</feature>
<feature type="mutagenesis site" description="Abolishes enzyme activation but has no effect on disulfide bond formation or dimer formation; when associated with A-169." evidence="5">
    <original>A</original>
    <variation>P</variation>
    <location>
        <position position="167"/>
    </location>
</feature>
<feature type="mutagenesis site" description="Abolishes enzyme activation but has no effect on disulfide bond formation or dimer formation; when associated with A-167." evidence="5">
    <original>A</original>
    <variation>P</variation>
    <location>
        <position position="169"/>
    </location>
</feature>
<feature type="strand" evidence="11">
    <location>
        <begin position="26"/>
        <end position="32"/>
    </location>
</feature>
<feature type="strand" evidence="11">
    <location>
        <begin position="37"/>
        <end position="43"/>
    </location>
</feature>
<feature type="strand" evidence="11">
    <location>
        <begin position="52"/>
        <end position="59"/>
    </location>
</feature>
<feature type="strand" evidence="11">
    <location>
        <begin position="65"/>
        <end position="71"/>
    </location>
</feature>
<feature type="turn" evidence="11">
    <location>
        <begin position="76"/>
        <end position="79"/>
    </location>
</feature>
<feature type="helix" evidence="11">
    <location>
        <begin position="80"/>
        <end position="82"/>
    </location>
</feature>
<feature type="strand" evidence="11">
    <location>
        <begin position="93"/>
        <end position="95"/>
    </location>
</feature>
<feature type="helix" evidence="11">
    <location>
        <begin position="96"/>
        <end position="99"/>
    </location>
</feature>
<feature type="strand" evidence="11">
    <location>
        <begin position="105"/>
        <end position="109"/>
    </location>
</feature>
<feature type="strand" evidence="11">
    <location>
        <begin position="115"/>
        <end position="121"/>
    </location>
</feature>
<feature type="strand" evidence="11">
    <location>
        <begin position="127"/>
        <end position="130"/>
    </location>
</feature>
<feature type="strand" evidence="11">
    <location>
        <begin position="137"/>
        <end position="142"/>
    </location>
</feature>
<feature type="helix" evidence="12">
    <location>
        <begin position="153"/>
        <end position="155"/>
    </location>
</feature>
<feature type="helix" evidence="12">
    <location>
        <begin position="156"/>
        <end position="162"/>
    </location>
</feature>
<feature type="turn" evidence="11">
    <location>
        <begin position="164"/>
        <end position="167"/>
    </location>
</feature>
<feature type="strand" evidence="11">
    <location>
        <begin position="168"/>
        <end position="176"/>
    </location>
</feature>
<keyword id="KW-0002">3D-structure</keyword>
<keyword id="KW-0025">Alternative splicing</keyword>
<keyword id="KW-0049">Antioxidant</keyword>
<keyword id="KW-0186">Copper</keyword>
<keyword id="KW-0963">Cytoplasm</keyword>
<keyword id="KW-1015">Disulfide bond</keyword>
<keyword id="KW-0479">Metal-binding</keyword>
<keyword id="KW-0560">Oxidoreductase</keyword>
<keyword id="KW-1185">Reference proteome</keyword>
<keyword id="KW-0732">Signal</keyword>
<keyword id="KW-0862">Zinc</keyword>
<proteinExistence type="evidence at protein level"/>
<organism>
    <name type="scientific">Caenorhabditis elegans</name>
    <dbReference type="NCBI Taxonomy" id="6239"/>
    <lineage>
        <taxon>Eukaryota</taxon>
        <taxon>Metazoa</taxon>
        <taxon>Ecdysozoa</taxon>
        <taxon>Nematoda</taxon>
        <taxon>Chromadorea</taxon>
        <taxon>Rhabditida</taxon>
        <taxon>Rhabditina</taxon>
        <taxon>Rhabditomorpha</taxon>
        <taxon>Rhabditoidea</taxon>
        <taxon>Rhabditidae</taxon>
        <taxon>Peloderinae</taxon>
        <taxon>Caenorhabditis</taxon>
    </lineage>
</organism>
<name>SODC_CAEEL</name>
<sequence length="180" mass="18700">MFMNLLTQVSNAIFPQVEAAQKMSNRAVAVLRGETVTGTIWITQKSENDQAVIEGEIKGLTPGLHGFHVHQYGDSTNGCISAGPHFNPFGKTHGGPKSEIRHVGDLGNVEAGADGVAKIKLTDTLVTLYGPNTVVGRSMVVHAGQDDLGEGVGDKAEESKKTGNAGARAACGVIALAAPQ</sequence>
<comment type="function">
    <text evidence="2 5 6 7">Protects cells against oxidative stress by converting superoxide radicals to hydrogen peroxide (PubMed:16234242). Required for normal brood size (PubMed:18073424). May be involved in regulating mpk-1 phosphorylation downstream of phosphatase ptp-2 during oocyte maturation (PubMed:20380830).</text>
</comment>
<comment type="catalytic activity">
    <reaction evidence="5">
        <text>2 superoxide + 2 H(+) = H2O2 + O2</text>
        <dbReference type="Rhea" id="RHEA:20696"/>
        <dbReference type="ChEBI" id="CHEBI:15378"/>
        <dbReference type="ChEBI" id="CHEBI:15379"/>
        <dbReference type="ChEBI" id="CHEBI:16240"/>
        <dbReference type="ChEBI" id="CHEBI:18421"/>
        <dbReference type="EC" id="1.15.1.1"/>
    </reaction>
    <physiologicalReaction direction="left-to-right" evidence="5">
        <dbReference type="Rhea" id="RHEA:20697"/>
    </physiologicalReaction>
</comment>
<comment type="cofactor">
    <cofactor evidence="1">
        <name>Cu cation</name>
        <dbReference type="ChEBI" id="CHEBI:23378"/>
    </cofactor>
    <text evidence="1">Binds 1 copper ion per subunit.</text>
</comment>
<comment type="cofactor">
    <cofactor evidence="1">
        <name>Zn(2+)</name>
        <dbReference type="ChEBI" id="CHEBI:29105"/>
    </cofactor>
    <text evidence="1">Binds 1 zinc ion per subunit.</text>
</comment>
<comment type="activity regulation">
    <text evidence="5">The insertion of copper which activates the protein requires glutathione. This is independent of copper chaperone for SOD1 (CCS), which activates orthologs.</text>
</comment>
<comment type="subunit">
    <text evidence="5">Homodimer.</text>
</comment>
<comment type="subcellular location">
    <subcellularLocation>
        <location evidence="1">Cytoplasm</location>
    </subcellularLocation>
</comment>
<comment type="alternative products">
    <event type="alternative splicing"/>
    <isoform>
        <id>P34697-1</id>
        <name>a</name>
        <sequence type="displayed"/>
    </isoform>
    <isoform>
        <id>P34697-2</id>
        <name>b</name>
        <sequence type="described" ref="VSP_033146"/>
    </isoform>
</comment>
<comment type="disruption phenotype">
    <text evidence="4 6 7">Worms exhibit increased oxidative stress and reduced brood size (PubMed:18073424). RNAi-mediated knockdown suppresses the slow germline development and the delayed egg-production of clk-1 mutants (PubMed:14657502). RNAi-mediated knockdown causes an increase in the number of oocytes with mpk-1 phosphorylation (PubMed:20380830).</text>
</comment>
<comment type="similarity">
    <text evidence="10">Belongs to the Cu-Zn superoxide dismutase family.</text>
</comment>
<evidence type="ECO:0000250" key="1"/>
<evidence type="ECO:0000250" key="2">
    <source>
        <dbReference type="UniProtKB" id="P00441"/>
    </source>
</evidence>
<evidence type="ECO:0000255" key="3"/>
<evidence type="ECO:0000269" key="4">
    <source>
    </source>
</evidence>
<evidence type="ECO:0000269" key="5">
    <source>
    </source>
</evidence>
<evidence type="ECO:0000269" key="6">
    <source>
    </source>
</evidence>
<evidence type="ECO:0000269" key="7">
    <source>
    </source>
</evidence>
<evidence type="ECO:0000303" key="8">
    <source>
    </source>
</evidence>
<evidence type="ECO:0000303" key="9">
    <source>
    </source>
</evidence>
<evidence type="ECO:0000305" key="10"/>
<evidence type="ECO:0007829" key="11">
    <source>
        <dbReference type="PDB" id="3KBE"/>
    </source>
</evidence>
<evidence type="ECO:0007829" key="12">
    <source>
        <dbReference type="PDB" id="3KBF"/>
    </source>
</evidence>